<accession>P83537</accession>
<organism>
    <name type="scientific">Fructilactobacillus sanfranciscensis</name>
    <name type="common">Lactobacillus sanfranciscensis</name>
    <dbReference type="NCBI Taxonomy" id="1625"/>
    <lineage>
        <taxon>Bacteria</taxon>
        <taxon>Bacillati</taxon>
        <taxon>Bacillota</taxon>
        <taxon>Bacilli</taxon>
        <taxon>Lactobacillales</taxon>
        <taxon>Lactobacillaceae</taxon>
        <taxon>Fructilactobacillus</taxon>
    </lineage>
</organism>
<evidence type="ECO:0000269" key="1">
    <source>
    </source>
</evidence>
<evidence type="ECO:0000303" key="2">
    <source>
    </source>
</evidence>
<evidence type="ECO:0000305" key="3"/>
<sequence>GSFFATPDDRH</sequence>
<protein>
    <recommendedName>
        <fullName>Unknown protein 7 from 2D-PAGE</fullName>
    </recommendedName>
</protein>
<name>UP07_FRUSA</name>
<comment type="induction">
    <text evidence="1">By elevated hydrostatic pressure.</text>
</comment>
<comment type="miscellaneous">
    <text evidence="1">On the 2D-gel the determined MW of this unknown protein is: 65 kDa.</text>
</comment>
<keyword id="KW-0903">Direct protein sequencing</keyword>
<reference evidence="3" key="1">
    <citation type="journal article" date="2002" name="Proteomics">
        <title>High pressure effects step-wise altered protein expression in Lactobacillus sanfranciscensis.</title>
        <authorList>
            <person name="Drews O."/>
            <person name="Weiss W."/>
            <person name="Reil G."/>
            <person name="Parlar H."/>
            <person name="Wait R."/>
            <person name="Goerg A."/>
        </authorList>
    </citation>
    <scope>PROTEIN SEQUENCE</scope>
    <scope>INDUCTION</scope>
    <source>
        <strain evidence="1">ATCC 27651 / DSM 20451 / JCM 5668 / KCTC 3205 / NCIMB 702811 / NRRL B-3934 / L-12</strain>
    </source>
</reference>
<proteinExistence type="evidence at protein level"/>
<feature type="chain" id="PRO_0000285978" description="Unknown protein 7 from 2D-PAGE">
    <location>
        <begin position="1" status="less than"/>
        <end position="11" status="greater than"/>
    </location>
</feature>
<feature type="non-terminal residue" evidence="2">
    <location>
        <position position="1"/>
    </location>
</feature>
<feature type="non-terminal residue" evidence="2">
    <location>
        <position position="11"/>
    </location>
</feature>